<protein>
    <recommendedName>
        <fullName evidence="1">Ribosomal RNA large subunit methyltransferase H</fullName>
        <ecNumber evidence="1">2.1.1.177</ecNumber>
    </recommendedName>
    <alternativeName>
        <fullName evidence="1">23S rRNA (pseudouridine1915-N3)-methyltransferase</fullName>
    </alternativeName>
    <alternativeName>
        <fullName evidence="1">23S rRNA m3Psi1915 methyltransferase</fullName>
    </alternativeName>
    <alternativeName>
        <fullName evidence="1">rRNA (pseudouridine-N3-)-methyltransferase RlmH</fullName>
    </alternativeName>
</protein>
<feature type="chain" id="PRO_1000147545" description="Ribosomal RNA large subunit methyltransferase H">
    <location>
        <begin position="1"/>
        <end position="160"/>
    </location>
</feature>
<feature type="binding site" evidence="1">
    <location>
        <position position="77"/>
    </location>
    <ligand>
        <name>S-adenosyl-L-methionine</name>
        <dbReference type="ChEBI" id="CHEBI:59789"/>
    </ligand>
</feature>
<feature type="binding site" evidence="1">
    <location>
        <position position="109"/>
    </location>
    <ligand>
        <name>S-adenosyl-L-methionine</name>
        <dbReference type="ChEBI" id="CHEBI:59789"/>
    </ligand>
</feature>
<feature type="binding site" evidence="1">
    <location>
        <begin position="128"/>
        <end position="133"/>
    </location>
    <ligand>
        <name>S-adenosyl-L-methionine</name>
        <dbReference type="ChEBI" id="CHEBI:59789"/>
    </ligand>
</feature>
<organism>
    <name type="scientific">Desulfitobacterium hafniense (strain DSM 10664 / DCB-2)</name>
    <dbReference type="NCBI Taxonomy" id="272564"/>
    <lineage>
        <taxon>Bacteria</taxon>
        <taxon>Bacillati</taxon>
        <taxon>Bacillota</taxon>
        <taxon>Clostridia</taxon>
        <taxon>Eubacteriales</taxon>
        <taxon>Desulfitobacteriaceae</taxon>
        <taxon>Desulfitobacterium</taxon>
    </lineage>
</organism>
<proteinExistence type="inferred from homology"/>
<dbReference type="EC" id="2.1.1.177" evidence="1"/>
<dbReference type="EMBL" id="CP001336">
    <property type="protein sequence ID" value="ACL22908.1"/>
    <property type="molecule type" value="Genomic_DNA"/>
</dbReference>
<dbReference type="RefSeq" id="WP_015945532.1">
    <property type="nucleotide sequence ID" value="NC_011830.1"/>
</dbReference>
<dbReference type="SMR" id="B8G0H2"/>
<dbReference type="KEGG" id="dhd:Dhaf_4914"/>
<dbReference type="HOGENOM" id="CLU_100552_0_0_9"/>
<dbReference type="Proteomes" id="UP000007726">
    <property type="component" value="Chromosome"/>
</dbReference>
<dbReference type="GO" id="GO:0005737">
    <property type="term" value="C:cytoplasm"/>
    <property type="evidence" value="ECO:0007669"/>
    <property type="project" value="UniProtKB-SubCell"/>
</dbReference>
<dbReference type="GO" id="GO:0070038">
    <property type="term" value="F:rRNA (pseudouridine-N3-)-methyltransferase activity"/>
    <property type="evidence" value="ECO:0007669"/>
    <property type="project" value="UniProtKB-UniRule"/>
</dbReference>
<dbReference type="CDD" id="cd18081">
    <property type="entry name" value="RlmH-like"/>
    <property type="match status" value="1"/>
</dbReference>
<dbReference type="Gene3D" id="3.40.1280.10">
    <property type="match status" value="1"/>
</dbReference>
<dbReference type="HAMAP" id="MF_00658">
    <property type="entry name" value="23SrRNA_methyltr_H"/>
    <property type="match status" value="1"/>
</dbReference>
<dbReference type="InterPro" id="IPR029028">
    <property type="entry name" value="Alpha/beta_knot_MTases"/>
</dbReference>
<dbReference type="InterPro" id="IPR003742">
    <property type="entry name" value="RlmH-like"/>
</dbReference>
<dbReference type="InterPro" id="IPR029026">
    <property type="entry name" value="tRNA_m1G_MTases_N"/>
</dbReference>
<dbReference type="NCBIfam" id="NF000985">
    <property type="entry name" value="PRK00103.1-3"/>
    <property type="match status" value="1"/>
</dbReference>
<dbReference type="NCBIfam" id="TIGR00246">
    <property type="entry name" value="tRNA_RlmH_YbeA"/>
    <property type="match status" value="1"/>
</dbReference>
<dbReference type="PANTHER" id="PTHR33603">
    <property type="entry name" value="METHYLTRANSFERASE"/>
    <property type="match status" value="1"/>
</dbReference>
<dbReference type="PANTHER" id="PTHR33603:SF1">
    <property type="entry name" value="RIBOSOMAL RNA LARGE SUBUNIT METHYLTRANSFERASE H"/>
    <property type="match status" value="1"/>
</dbReference>
<dbReference type="Pfam" id="PF02590">
    <property type="entry name" value="SPOUT_MTase"/>
    <property type="match status" value="1"/>
</dbReference>
<dbReference type="PIRSF" id="PIRSF004505">
    <property type="entry name" value="MT_bac"/>
    <property type="match status" value="1"/>
</dbReference>
<dbReference type="SUPFAM" id="SSF75217">
    <property type="entry name" value="alpha/beta knot"/>
    <property type="match status" value="1"/>
</dbReference>
<evidence type="ECO:0000255" key="1">
    <source>
        <dbReference type="HAMAP-Rule" id="MF_00658"/>
    </source>
</evidence>
<reference key="1">
    <citation type="journal article" date="2012" name="BMC Microbiol.">
        <title>Genome sequence of Desulfitobacterium hafniense DCB-2, a Gram-positive anaerobe capable of dehalogenation and metal reduction.</title>
        <authorList>
            <person name="Kim S.H."/>
            <person name="Harzman C."/>
            <person name="Davis J.K."/>
            <person name="Hutcheson R."/>
            <person name="Broderick J.B."/>
            <person name="Marsh T.L."/>
            <person name="Tiedje J.M."/>
        </authorList>
    </citation>
    <scope>NUCLEOTIDE SEQUENCE [LARGE SCALE GENOMIC DNA]</scope>
    <source>
        <strain>DSM 10664 / DCB-2</strain>
    </source>
</reference>
<sequence>MLQIKIVAVGKIRERFLMEGIKEYAKRLSAYIRLEMTEIADEPCPERLSAADEERVKDREGERLLKGIGPQEHVILLDLQGKEFTSPDFSEYMDELALMGKSSVTFIIGGSLGVSGEVRKRADYRWSFSRLTFPHPLMRLMLLEQIYRAMRISKGEPYHK</sequence>
<accession>B8G0H2</accession>
<name>RLMH_DESHD</name>
<gene>
    <name evidence="1" type="primary">rlmH</name>
    <name type="ordered locus">Dhaf_4914</name>
</gene>
<comment type="function">
    <text evidence="1">Specifically methylates the pseudouridine at position 1915 (m3Psi1915) in 23S rRNA.</text>
</comment>
<comment type="catalytic activity">
    <reaction evidence="1">
        <text>pseudouridine(1915) in 23S rRNA + S-adenosyl-L-methionine = N(3)-methylpseudouridine(1915) in 23S rRNA + S-adenosyl-L-homocysteine + H(+)</text>
        <dbReference type="Rhea" id="RHEA:42752"/>
        <dbReference type="Rhea" id="RHEA-COMP:10221"/>
        <dbReference type="Rhea" id="RHEA-COMP:10222"/>
        <dbReference type="ChEBI" id="CHEBI:15378"/>
        <dbReference type="ChEBI" id="CHEBI:57856"/>
        <dbReference type="ChEBI" id="CHEBI:59789"/>
        <dbReference type="ChEBI" id="CHEBI:65314"/>
        <dbReference type="ChEBI" id="CHEBI:74486"/>
        <dbReference type="EC" id="2.1.1.177"/>
    </reaction>
</comment>
<comment type="subunit">
    <text evidence="1">Homodimer.</text>
</comment>
<comment type="subcellular location">
    <subcellularLocation>
        <location evidence="1">Cytoplasm</location>
    </subcellularLocation>
</comment>
<comment type="similarity">
    <text evidence="1">Belongs to the RNA methyltransferase RlmH family.</text>
</comment>
<keyword id="KW-0963">Cytoplasm</keyword>
<keyword id="KW-0489">Methyltransferase</keyword>
<keyword id="KW-0698">rRNA processing</keyword>
<keyword id="KW-0949">S-adenosyl-L-methionine</keyword>
<keyword id="KW-0808">Transferase</keyword>